<feature type="signal peptide" evidence="1">
    <location>
        <begin position="1"/>
        <end position="24"/>
    </location>
</feature>
<feature type="chain" id="PRO_0000013649" description="Uncharacterized protein AF_1001">
    <location>
        <begin position="25"/>
        <end position="194"/>
    </location>
</feature>
<gene>
    <name type="ordered locus">AF_1001</name>
</gene>
<keyword id="KW-1185">Reference proteome</keyword>
<keyword id="KW-0732">Signal</keyword>
<proteinExistence type="inferred from homology"/>
<evidence type="ECO:0000255" key="1">
    <source>
        <dbReference type="PROSITE-ProRule" id="PRU00303"/>
    </source>
</evidence>
<protein>
    <recommendedName>
        <fullName>Uncharacterized protein AF_1001</fullName>
    </recommendedName>
</protein>
<organism>
    <name type="scientific">Archaeoglobus fulgidus (strain ATCC 49558 / DSM 4304 / JCM 9628 / NBRC 100126 / VC-16)</name>
    <dbReference type="NCBI Taxonomy" id="224325"/>
    <lineage>
        <taxon>Archaea</taxon>
        <taxon>Methanobacteriati</taxon>
        <taxon>Methanobacteriota</taxon>
        <taxon>Archaeoglobi</taxon>
        <taxon>Archaeoglobales</taxon>
        <taxon>Archaeoglobaceae</taxon>
        <taxon>Archaeoglobus</taxon>
    </lineage>
</organism>
<reference key="1">
    <citation type="journal article" date="1997" name="Nature">
        <title>The complete genome sequence of the hyperthermophilic, sulphate-reducing archaeon Archaeoglobus fulgidus.</title>
        <authorList>
            <person name="Klenk H.-P."/>
            <person name="Clayton R.A."/>
            <person name="Tomb J.-F."/>
            <person name="White O."/>
            <person name="Nelson K.E."/>
            <person name="Ketchum K.A."/>
            <person name="Dodson R.J."/>
            <person name="Gwinn M.L."/>
            <person name="Hickey E.K."/>
            <person name="Peterson J.D."/>
            <person name="Richardson D.L."/>
            <person name="Kerlavage A.R."/>
            <person name="Graham D.E."/>
            <person name="Kyrpides N.C."/>
            <person name="Fleischmann R.D."/>
            <person name="Quackenbush J."/>
            <person name="Lee N.H."/>
            <person name="Sutton G.G."/>
            <person name="Gill S.R."/>
            <person name="Kirkness E.F."/>
            <person name="Dougherty B.A."/>
            <person name="McKenney K."/>
            <person name="Adams M.D."/>
            <person name="Loftus B.J."/>
            <person name="Peterson S.N."/>
            <person name="Reich C.I."/>
            <person name="McNeil L.K."/>
            <person name="Badger J.H."/>
            <person name="Glodek A."/>
            <person name="Zhou L."/>
            <person name="Overbeek R."/>
            <person name="Gocayne J.D."/>
            <person name="Weidman J.F."/>
            <person name="McDonald L.A."/>
            <person name="Utterback T.R."/>
            <person name="Cotton M.D."/>
            <person name="Spriggs T."/>
            <person name="Artiach P."/>
            <person name="Kaine B.P."/>
            <person name="Sykes S.M."/>
            <person name="Sadow P.W."/>
            <person name="D'Andrea K.P."/>
            <person name="Bowman C."/>
            <person name="Fujii C."/>
            <person name="Garland S.A."/>
            <person name="Mason T.M."/>
            <person name="Olsen G.J."/>
            <person name="Fraser C.M."/>
            <person name="Smith H.O."/>
            <person name="Woese C.R."/>
            <person name="Venter J.C."/>
        </authorList>
    </citation>
    <scope>NUCLEOTIDE SEQUENCE [LARGE SCALE GENOMIC DNA]</scope>
    <source>
        <strain>ATCC 49558 / DSM 4304 / JCM 9628 / NBRC 100126 / VC-16</strain>
    </source>
</reference>
<sequence>MRKFVAFFVIVALAALLAGCGGQGEQEQKPSEQKTTTTVAESKGIETLSDLYNSKKMVHGTAKVTLQGETTTVEFWYYFDMPNKETLLRYEGEQGGMGKMTAIIKNKYSGTTLTQTMYMKSEKMEAQGCDWIVITQTSTISQSESNIGDEPVEDAFKSTFASQGNVWEYEVETVDYNPSLFQPDGKVCQFSYGS</sequence>
<accession>O29261</accession>
<dbReference type="EMBL" id="AE000782">
    <property type="protein sequence ID" value="AAB90249.1"/>
    <property type="molecule type" value="Genomic_DNA"/>
</dbReference>
<dbReference type="PIR" id="A69375">
    <property type="entry name" value="A69375"/>
</dbReference>
<dbReference type="RefSeq" id="WP_010878501.1">
    <property type="nucleotide sequence ID" value="NC_000917.1"/>
</dbReference>
<dbReference type="STRING" id="224325.AF_1001"/>
<dbReference type="PaxDb" id="224325-AF_1001"/>
<dbReference type="EnsemblBacteria" id="AAB90249">
    <property type="protein sequence ID" value="AAB90249"/>
    <property type="gene ID" value="AF_1001"/>
</dbReference>
<dbReference type="KEGG" id="afu:AF_1001"/>
<dbReference type="eggNOG" id="arCOG12199">
    <property type="taxonomic scope" value="Archaea"/>
</dbReference>
<dbReference type="HOGENOM" id="CLU_1399670_0_0_2"/>
<dbReference type="OrthoDB" id="379843at2157"/>
<dbReference type="Proteomes" id="UP000002199">
    <property type="component" value="Chromosome"/>
</dbReference>
<dbReference type="PROSITE" id="PS51257">
    <property type="entry name" value="PROKAR_LIPOPROTEIN"/>
    <property type="match status" value="1"/>
</dbReference>
<name>Y1001_ARCFU</name>